<accession>P20418</accession>
<accession>Q9R523</accession>
<protein>
    <recommendedName>
        <fullName>Desulfoferrodoxin</fullName>
        <shortName>Dfx</shortName>
        <ecNumber>1.15.1.2</ecNumber>
    </recommendedName>
    <alternativeName>
        <fullName>Superoxide reductase</fullName>
        <shortName>SOR</shortName>
    </alternativeName>
</protein>
<proteinExistence type="evidence at protein level"/>
<evidence type="ECO:0000250" key="1"/>
<evidence type="ECO:0000250" key="2">
    <source>
        <dbReference type="UniProtKB" id="Q97GB9"/>
    </source>
</evidence>
<evidence type="ECO:0000269" key="3">
    <source>
    </source>
</evidence>
<evidence type="ECO:0000269" key="4">
    <source>
    </source>
</evidence>
<evidence type="ECO:0000269" key="5">
    <source>
    </source>
</evidence>
<evidence type="ECO:0000269" key="6">
    <source>
    </source>
</evidence>
<evidence type="ECO:0000269" key="7">
    <source>
    </source>
</evidence>
<evidence type="ECO:0000269" key="8">
    <source>
    </source>
</evidence>
<evidence type="ECO:0000305" key="9"/>
<evidence type="ECO:0000305" key="10">
    <source>
    </source>
</evidence>
<gene>
    <name type="primary">dfx</name>
    <name type="synonym">rbo</name>
    <name type="ordered locus">DVU_3183</name>
</gene>
<comment type="function">
    <text evidence="3 5 8">Catalyzes the one-electron reduction of superoxide anion radical to hydrogen peroxide at a nonheme ferrous iron center. Plays a fundamental role in case of oxidative stress via its superoxide detoxification activity.</text>
</comment>
<comment type="catalytic activity">
    <reaction evidence="2">
        <text>reduced [rubredoxin] + superoxide + 2 H(+) = oxidized [rubredoxin] + H2O2</text>
        <dbReference type="Rhea" id="RHEA:21324"/>
        <dbReference type="Rhea" id="RHEA-COMP:10302"/>
        <dbReference type="Rhea" id="RHEA-COMP:10303"/>
        <dbReference type="ChEBI" id="CHEBI:15378"/>
        <dbReference type="ChEBI" id="CHEBI:16240"/>
        <dbReference type="ChEBI" id="CHEBI:18421"/>
        <dbReference type="ChEBI" id="CHEBI:29033"/>
        <dbReference type="ChEBI" id="CHEBI:29034"/>
        <dbReference type="EC" id="1.15.1.2"/>
    </reaction>
</comment>
<comment type="cofactor">
    <cofactor evidence="7">
        <name>Fe(3+)</name>
        <dbReference type="ChEBI" id="CHEBI:29034"/>
    </cofactor>
    <text evidence="7">Binds 1 Fe(3+) ion per subunit. The iron ion 1 is coordinated via 4 cysteine residues.</text>
</comment>
<comment type="cofactor">
    <cofactor evidence="7">
        <name>Cu(2+)</name>
        <dbReference type="ChEBI" id="CHEBI:29036"/>
    </cofactor>
    <text evidence="7">Binds 1 Fe(2+) ion per subunit. The iron ion 2 is coordinated via four histidines and one cysteine residue.</text>
</comment>
<comment type="biophysicochemical properties">
    <redoxPotential>
        <text>E(0) is +2 mV for center I and +90 mV for center II at pH 7.5.</text>
    </redoxPotential>
</comment>
<comment type="subunit">
    <text evidence="7">Homodimer.</text>
</comment>
<comment type="domain">
    <text>Is organized in two protein domains. The N-terminal domain has a fold similar to that of desulforedoxin and contains a mononuclear Fe(3+) ion, center I. The second domain contains a different mononuclear iron center, center II, with a Fe(2+) ion.</text>
</comment>
<comment type="miscellaneous">
    <text>Catalysis occurs at center II. Fe(2+) ion of center II is the electron donor and is converted to the Fe(3+) form during the reaction.</text>
</comment>
<comment type="similarity">
    <text evidence="9">Belongs to the desulfoferrodoxin family.</text>
</comment>
<comment type="caution">
    <text evidence="10">Was originally thought to be a rubredoxin oxidoreductase.</text>
</comment>
<feature type="initiator methionine" description="Removed" evidence="6 7">
    <location>
        <position position="1"/>
    </location>
</feature>
<feature type="chain" id="PRO_0000140865" description="Desulfoferrodoxin">
    <location>
        <begin position="2"/>
        <end position="126"/>
    </location>
</feature>
<feature type="binding site" evidence="1">
    <location>
        <position position="10"/>
    </location>
    <ligand>
        <name>Fe cation</name>
        <dbReference type="ChEBI" id="CHEBI:24875"/>
        <label>1</label>
    </ligand>
</feature>
<feature type="binding site" evidence="1">
    <location>
        <position position="13"/>
    </location>
    <ligand>
        <name>Fe cation</name>
        <dbReference type="ChEBI" id="CHEBI:24875"/>
        <label>1</label>
    </ligand>
</feature>
<feature type="binding site" evidence="1">
    <location>
        <position position="29"/>
    </location>
    <ligand>
        <name>Fe cation</name>
        <dbReference type="ChEBI" id="CHEBI:24875"/>
        <label>1</label>
    </ligand>
</feature>
<feature type="binding site" evidence="1">
    <location>
        <position position="30"/>
    </location>
    <ligand>
        <name>Fe cation</name>
        <dbReference type="ChEBI" id="CHEBI:24875"/>
        <label>1</label>
    </ligand>
</feature>
<feature type="binding site" evidence="1">
    <location>
        <position position="49"/>
    </location>
    <ligand>
        <name>Fe cation</name>
        <dbReference type="ChEBI" id="CHEBI:24875"/>
        <label>2</label>
        <note>catalytic</note>
    </ligand>
</feature>
<feature type="binding site" evidence="1">
    <location>
        <position position="69"/>
    </location>
    <ligand>
        <name>Fe cation</name>
        <dbReference type="ChEBI" id="CHEBI:24875"/>
        <label>2</label>
        <note>catalytic</note>
    </ligand>
</feature>
<feature type="binding site" evidence="1">
    <location>
        <position position="75"/>
    </location>
    <ligand>
        <name>Fe cation</name>
        <dbReference type="ChEBI" id="CHEBI:24875"/>
        <label>2</label>
        <note>catalytic</note>
    </ligand>
</feature>
<feature type="binding site" evidence="1">
    <location>
        <position position="116"/>
    </location>
    <ligand>
        <name>Fe cation</name>
        <dbReference type="ChEBI" id="CHEBI:24875"/>
        <label>2</label>
        <note>catalytic</note>
    </ligand>
</feature>
<feature type="binding site" evidence="1">
    <location>
        <position position="119"/>
    </location>
    <ligand>
        <name>Fe cation</name>
        <dbReference type="ChEBI" id="CHEBI:24875"/>
        <label>2</label>
        <note>catalytic</note>
    </ligand>
</feature>
<feature type="mutagenesis site" description="No effect on activity. No iron present in center I." evidence="4">
    <original>C</original>
    <variation>S</variation>
    <location>
        <position position="13"/>
    </location>
</feature>
<feature type="mutagenesis site" description="No effect on activity." evidence="3">
    <original>E</original>
    <variation>A</variation>
    <location>
        <position position="47"/>
    </location>
</feature>
<feature type="mutagenesis site" description="Decrease in activity." evidence="3">
    <original>K</original>
    <variation>A</variation>
    <location>
        <position position="48"/>
    </location>
</feature>
<dbReference type="EC" id="1.15.1.2"/>
<dbReference type="EMBL" id="M28848">
    <property type="protein sequence ID" value="AAA64797.1"/>
    <property type="molecule type" value="Genomic_DNA"/>
</dbReference>
<dbReference type="EMBL" id="M81168">
    <property type="protein sequence ID" value="AAA23380.1"/>
    <property type="molecule type" value="Genomic_DNA"/>
</dbReference>
<dbReference type="EMBL" id="AE017285">
    <property type="protein sequence ID" value="AAS97653.1"/>
    <property type="molecule type" value="Genomic_DNA"/>
</dbReference>
<dbReference type="PIR" id="A33962">
    <property type="entry name" value="RDDVBX"/>
</dbReference>
<dbReference type="RefSeq" id="WP_010940441.1">
    <property type="nucleotide sequence ID" value="NC_002937.3"/>
</dbReference>
<dbReference type="RefSeq" id="YP_012393.1">
    <property type="nucleotide sequence ID" value="NC_002937.3"/>
</dbReference>
<dbReference type="SMR" id="P20418"/>
<dbReference type="STRING" id="882.DVU_3183"/>
<dbReference type="PaxDb" id="882-DVU_3183"/>
<dbReference type="EnsemblBacteria" id="AAS97653">
    <property type="protein sequence ID" value="AAS97653"/>
    <property type="gene ID" value="DVU_3183"/>
</dbReference>
<dbReference type="KEGG" id="dvu:DVU_3183"/>
<dbReference type="PATRIC" id="fig|882.5.peg.2888"/>
<dbReference type="eggNOG" id="COG2033">
    <property type="taxonomic scope" value="Bacteria"/>
</dbReference>
<dbReference type="HOGENOM" id="CLU_118960_1_0_7"/>
<dbReference type="OrthoDB" id="9814936at2"/>
<dbReference type="PhylomeDB" id="P20418"/>
<dbReference type="BRENDA" id="1.15.1.2">
    <property type="organism ID" value="1914"/>
</dbReference>
<dbReference type="Proteomes" id="UP000002194">
    <property type="component" value="Chromosome"/>
</dbReference>
<dbReference type="GO" id="GO:0005506">
    <property type="term" value="F:iron ion binding"/>
    <property type="evidence" value="ECO:0007669"/>
    <property type="project" value="InterPro"/>
</dbReference>
<dbReference type="GO" id="GO:0050605">
    <property type="term" value="F:superoxide reductase activity"/>
    <property type="evidence" value="ECO:0007669"/>
    <property type="project" value="UniProtKB-EC"/>
</dbReference>
<dbReference type="GO" id="GO:0019430">
    <property type="term" value="P:removal of superoxide radicals"/>
    <property type="evidence" value="ECO:0007669"/>
    <property type="project" value="InterPro"/>
</dbReference>
<dbReference type="CDD" id="cd00974">
    <property type="entry name" value="DSRD"/>
    <property type="match status" value="1"/>
</dbReference>
<dbReference type="CDD" id="cd03171">
    <property type="entry name" value="SORL_Dfx_classI"/>
    <property type="match status" value="1"/>
</dbReference>
<dbReference type="Gene3D" id="2.20.28.100">
    <property type="entry name" value="Desulphoferrodoxin, N-terminal domain"/>
    <property type="match status" value="1"/>
</dbReference>
<dbReference type="Gene3D" id="2.60.40.730">
    <property type="entry name" value="SOR catalytic domain"/>
    <property type="match status" value="1"/>
</dbReference>
<dbReference type="InterPro" id="IPR002742">
    <property type="entry name" value="Desulfoferrodoxin_Fe-bd_dom"/>
</dbReference>
<dbReference type="InterPro" id="IPR036073">
    <property type="entry name" value="Desulfoferrodoxin_Fe-bd_dom_sf"/>
</dbReference>
<dbReference type="InterPro" id="IPR004462">
    <property type="entry name" value="Desulfoferrodoxin_N"/>
</dbReference>
<dbReference type="InterPro" id="IPR038094">
    <property type="entry name" value="Desulfoferrodoxin_N_sf"/>
</dbReference>
<dbReference type="InterPro" id="IPR004793">
    <property type="entry name" value="Desulfoferrodoxin_rbo"/>
</dbReference>
<dbReference type="InterPro" id="IPR051233">
    <property type="entry name" value="Desulfoferrodoxin_SOR"/>
</dbReference>
<dbReference type="NCBIfam" id="TIGR00319">
    <property type="entry name" value="desulf_FeS4"/>
    <property type="match status" value="1"/>
</dbReference>
<dbReference type="NCBIfam" id="TIGR00320">
    <property type="entry name" value="dfx_rbo"/>
    <property type="match status" value="1"/>
</dbReference>
<dbReference type="NCBIfam" id="TIGR00332">
    <property type="entry name" value="neela_ferrous"/>
    <property type="match status" value="1"/>
</dbReference>
<dbReference type="PANTHER" id="PTHR36541">
    <property type="entry name" value="SUPEROXIDE REDUCTASE-RELATED"/>
    <property type="match status" value="1"/>
</dbReference>
<dbReference type="PANTHER" id="PTHR36541:SF1">
    <property type="entry name" value="SUPEROXIDE REDUCTASE-RELATED"/>
    <property type="match status" value="1"/>
</dbReference>
<dbReference type="Pfam" id="PF06397">
    <property type="entry name" value="Desulfoferrod_N"/>
    <property type="match status" value="1"/>
</dbReference>
<dbReference type="Pfam" id="PF01880">
    <property type="entry name" value="Desulfoferrodox"/>
    <property type="match status" value="1"/>
</dbReference>
<dbReference type="SUPFAM" id="SSF57802">
    <property type="entry name" value="Rubredoxin-like"/>
    <property type="match status" value="1"/>
</dbReference>
<dbReference type="SUPFAM" id="SSF49367">
    <property type="entry name" value="Superoxide reductase-like"/>
    <property type="match status" value="1"/>
</dbReference>
<sequence>MPNQYEIYKCIHCGNIVEVLHAGGGDLVCCGEPMKLMKEGTSDGAKEKHVPVIEKTANGYKVTVGSVAHPMEEKHWIEWIELVADGVSYKKFLKPGDAPEAEFCIKADKVVAREYCNLHGHWKAEA</sequence>
<organism>
    <name type="scientific">Nitratidesulfovibrio vulgaris (strain ATCC 29579 / DSM 644 / CCUG 34227 / NCIMB 8303 / VKM B-1760 / Hildenborough)</name>
    <name type="common">Desulfovibrio vulgaris</name>
    <dbReference type="NCBI Taxonomy" id="882"/>
    <lineage>
        <taxon>Bacteria</taxon>
        <taxon>Pseudomonadati</taxon>
        <taxon>Thermodesulfobacteriota</taxon>
        <taxon>Desulfovibrionia</taxon>
        <taxon>Desulfovibrionales</taxon>
        <taxon>Desulfovibrionaceae</taxon>
        <taxon>Nitratidesulfovibrio</taxon>
    </lineage>
</organism>
<reference key="1">
    <citation type="journal article" date="1989" name="J. Bacteriol.">
        <title>Analysis of the transcriptional unit encoding the genes for rubredoxin (rub) and a putative rubredoxin oxidoreductase (rbo) in Desulfovibrio vulgaris Hildenborough.</title>
        <authorList>
            <person name="Brumlik M.J."/>
            <person name="Voordouw G."/>
        </authorList>
    </citation>
    <scope>NUCLEOTIDE SEQUENCE [GENOMIC DNA]</scope>
</reference>
<reference key="2">
    <citation type="journal article" date="2004" name="Nat. Biotechnol.">
        <title>The genome sequence of the anaerobic, sulfate-reducing bacterium Desulfovibrio vulgaris Hildenborough.</title>
        <authorList>
            <person name="Heidelberg J.F."/>
            <person name="Seshadri R."/>
            <person name="Haveman S.A."/>
            <person name="Hemme C.L."/>
            <person name="Paulsen I.T."/>
            <person name="Kolonay J.F."/>
            <person name="Eisen J.A."/>
            <person name="Ward N.L."/>
            <person name="Methe B.A."/>
            <person name="Brinkac L.M."/>
            <person name="Daugherty S.C."/>
            <person name="DeBoy R.T."/>
            <person name="Dodson R.J."/>
            <person name="Durkin A.S."/>
            <person name="Madupu R."/>
            <person name="Nelson W.C."/>
            <person name="Sullivan S.A."/>
            <person name="Fouts D.E."/>
            <person name="Haft D.H."/>
            <person name="Selengut J."/>
            <person name="Peterson J.D."/>
            <person name="Davidsen T.M."/>
            <person name="Zafar N."/>
            <person name="Zhou L."/>
            <person name="Radune D."/>
            <person name="Dimitrov G."/>
            <person name="Hance M."/>
            <person name="Tran K."/>
            <person name="Khouri H.M."/>
            <person name="Gill J."/>
            <person name="Utterback T.R."/>
            <person name="Feldblyum T.V."/>
            <person name="Wall J.D."/>
            <person name="Voordouw G."/>
            <person name="Fraser C.M."/>
        </authorList>
    </citation>
    <scope>NUCLEOTIDE SEQUENCE [LARGE SCALE GENOMIC DNA]</scope>
    <source>
        <strain>ATCC 29579 / DSM 644 / CCUG 34227 / NCIMB 8303 / VKM B-1760 / Hildenborough</strain>
    </source>
</reference>
<reference key="3">
    <citation type="journal article" date="1990" name="J. Biol. Chem.">
        <title>Purification and characterization of desulfoferrodoxin. A novel protein from Desulfovibrio desulfuricans (ATCC 27774) and from Desulfovibrio vulgaris (strain Hildenborough) that contains a distorted rubredoxin center and a mononuclear ferrous center.</title>
        <authorList>
            <person name="Moura I."/>
            <person name="Tavares P."/>
            <person name="Moura J.J.G."/>
            <person name="Ravi N."/>
            <person name="Huynh B.H."/>
            <person name="Liu M.-Y."/>
            <person name="Le Gall J."/>
        </authorList>
    </citation>
    <scope>PROTEIN SEQUENCE OF 2-45</scope>
    <scope>SPECTROSCOPIC STUDIES</scope>
</reference>
<reference key="4">
    <citation type="journal article" date="1993" name="FEBS Lett.">
        <title>On the two iron centers of desulfoferrodoxin.</title>
        <authorList>
            <person name="Verhagen M.F.J.M."/>
            <person name="Voorhorst W.G.B."/>
            <person name="Kolkman J.A."/>
            <person name="Wolbert R.B.G."/>
            <person name="Hagen W.R."/>
        </authorList>
    </citation>
    <scope>PROTEIN SEQUENCE OF 2-16</scope>
    <scope>COFACTOR</scope>
    <scope>SUBUNIT</scope>
    <scope>REDOX POTENTIAL</scope>
    <scope>SPECTROSCOPIC STUDIES</scope>
</reference>
<reference key="5">
    <citation type="journal article" date="1998" name="Appl. Environ. Microbiol.">
        <title>Deletion of the rbo gene increases the oxygen sensitivity of the sulfate-reducing bacterium Desulfovibrio vulgaris Hildenborough.</title>
        <authorList>
            <person name="Voordouw J.K."/>
            <person name="Voordouw G."/>
        </authorList>
    </citation>
    <scope>ROLE IN OXIDATIVE STRESS</scope>
</reference>
<reference key="6">
    <citation type="journal article" date="2002" name="Biochemistry">
        <title>Kinetics and mechanism of superoxide reduction by two-iron superoxide reductase from Desulfovibrio vulgaris.</title>
        <authorList>
            <person name="Emerson J.P."/>
            <person name="Coulter E.D."/>
            <person name="Cabelli D.E."/>
            <person name="Phillips R.S."/>
            <person name="Kurtz D.M. Jr."/>
        </authorList>
    </citation>
    <scope>FUNCTION</scope>
    <scope>MUTAGENESIS OF GLU-47 AND LYS-48</scope>
    <scope>KINETIC STUDIES</scope>
    <scope>REACTION MECHANISM</scope>
</reference>
<reference key="7">
    <citation type="journal article" date="2003" name="J. Biol. Chem.">
        <title>Kinetics of the superoxide reductase catalytic cycle.</title>
        <authorList>
            <person name="Emerson J.P."/>
            <person name="Coulter E.D."/>
            <person name="Phillips R.S."/>
            <person name="Kurtz D.M. Jr."/>
        </authorList>
    </citation>
    <scope>FUNCTION</scope>
    <scope>ROLE IN OXIDATIVE STRESS</scope>
    <scope>KINETIC STUDIES</scope>
</reference>
<reference key="8">
    <citation type="journal article" date="2003" name="J. Biol. Inorg. Chem.">
        <title>Spectroscopic characterization of the [Fe(His)(4)(Cys)] site in 2Fe-superoxide reductase from Desulfovibrio vulgaris.</title>
        <authorList>
            <person name="Clay M.D."/>
            <person name="Emerson J.P."/>
            <person name="Coulter E.D."/>
            <person name="Kurtz D.M. Jr."/>
            <person name="Johnson M.K."/>
        </authorList>
    </citation>
    <scope>SPECTROSCOPIC STUDIES</scope>
</reference>
<reference key="9">
    <citation type="journal article" date="2003" name="Proc. Natl. Acad. Sci. U.S.A.">
        <title>An engineered two-iron superoxide reductase lacking the [Fe(SCys)4] site retains its catalytic properties in vitro and in vivo.</title>
        <authorList>
            <person name="Emerson J.P."/>
            <person name="Cabelli D.E."/>
            <person name="Kurtz D.M. Jr."/>
        </authorList>
    </citation>
    <scope>MUTAGENESIS OF CYS-13</scope>
</reference>
<name>DFX_NITV2</name>
<keyword id="KW-0216">Detoxification</keyword>
<keyword id="KW-0903">Direct protein sequencing</keyword>
<keyword id="KW-0249">Electron transport</keyword>
<keyword id="KW-0408">Iron</keyword>
<keyword id="KW-0479">Metal-binding</keyword>
<keyword id="KW-0560">Oxidoreductase</keyword>
<keyword id="KW-1185">Reference proteome</keyword>
<keyword id="KW-0813">Transport</keyword>